<proteinExistence type="evidence at transcript level"/>
<feature type="chain" id="PRO_0000361534" description="SWI/SNF-related matrix-associated actin-dependent regulator of chromatin subfamily A-like protein 1">
    <location>
        <begin position="1"/>
        <end position="960"/>
    </location>
</feature>
<feature type="domain" description="HARP 1" evidence="5">
    <location>
        <begin position="246"/>
        <end position="317"/>
    </location>
</feature>
<feature type="domain" description="HARP 2" evidence="5">
    <location>
        <begin position="349"/>
        <end position="420"/>
    </location>
</feature>
<feature type="domain" description="Helicase ATP-binding" evidence="3">
    <location>
        <begin position="466"/>
        <end position="621"/>
    </location>
</feature>
<feature type="domain" description="Helicase C-terminal" evidence="4">
    <location>
        <begin position="737"/>
        <end position="890"/>
    </location>
</feature>
<feature type="region of interest" description="Disordered" evidence="6">
    <location>
        <begin position="81"/>
        <end position="126"/>
    </location>
</feature>
<feature type="region of interest" description="Disordered" evidence="6">
    <location>
        <begin position="145"/>
        <end position="182"/>
    </location>
</feature>
<feature type="coiled-coil region" evidence="2">
    <location>
        <begin position="5"/>
        <end position="41"/>
    </location>
</feature>
<feature type="short sequence motif" description="DESH box">
    <location>
        <begin position="570"/>
        <end position="573"/>
    </location>
</feature>
<feature type="short sequence motif" description="Nuclear localization signal" evidence="1">
    <location>
        <begin position="665"/>
        <end position="682"/>
    </location>
</feature>
<feature type="compositionally biased region" description="Polar residues" evidence="6">
    <location>
        <begin position="145"/>
        <end position="165"/>
    </location>
</feature>
<feature type="binding site" evidence="3">
    <location>
        <begin position="479"/>
        <end position="486"/>
    </location>
    <ligand>
        <name>ATP</name>
        <dbReference type="ChEBI" id="CHEBI:30616"/>
    </ligand>
</feature>
<protein>
    <recommendedName>
        <fullName>SWI/SNF-related matrix-associated actin-dependent regulator of chromatin subfamily A-like protein 1</fullName>
        <ecNumber evidence="1">3.6.4.-</ecNumber>
    </recommendedName>
    <alternativeName>
        <fullName>HepA-related protein</fullName>
    </alternativeName>
    <alternativeName>
        <fullName>Sucrose nonfermenting protein 2-like 1</fullName>
    </alternativeName>
</protein>
<organism>
    <name type="scientific">Xenopus laevis</name>
    <name type="common">African clawed frog</name>
    <dbReference type="NCBI Taxonomy" id="8355"/>
    <lineage>
        <taxon>Eukaryota</taxon>
        <taxon>Metazoa</taxon>
        <taxon>Chordata</taxon>
        <taxon>Craniata</taxon>
        <taxon>Vertebrata</taxon>
        <taxon>Euteleostomi</taxon>
        <taxon>Amphibia</taxon>
        <taxon>Batrachia</taxon>
        <taxon>Anura</taxon>
        <taxon>Pipoidea</taxon>
        <taxon>Pipidae</taxon>
        <taxon>Xenopodinae</taxon>
        <taxon>Xenopus</taxon>
        <taxon>Xenopus</taxon>
    </lineage>
</organism>
<name>SMAL1_XENLA</name>
<accession>Q498E7</accession>
<dbReference type="EC" id="3.6.4.-" evidence="1"/>
<dbReference type="EMBL" id="BC100245">
    <property type="protein sequence ID" value="AAI00246.1"/>
    <property type="molecule type" value="mRNA"/>
</dbReference>
<dbReference type="RefSeq" id="NP_001089668.1">
    <property type="nucleotide sequence ID" value="NM_001096199.1"/>
</dbReference>
<dbReference type="SMR" id="Q498E7"/>
<dbReference type="DNASU" id="734728"/>
<dbReference type="GeneID" id="734728"/>
<dbReference type="KEGG" id="xla:734728"/>
<dbReference type="AGR" id="Xenbase:XB-GENE-866253"/>
<dbReference type="CTD" id="734728"/>
<dbReference type="Xenbase" id="XB-GENE-866253">
    <property type="gene designation" value="smarcal1.L"/>
</dbReference>
<dbReference type="OrthoDB" id="2801544at2759"/>
<dbReference type="Proteomes" id="UP000186698">
    <property type="component" value="Chromosome 9_10L"/>
</dbReference>
<dbReference type="Bgee" id="734728">
    <property type="expression patterns" value="Expressed in testis and 19 other cell types or tissues"/>
</dbReference>
<dbReference type="GO" id="GO:0043596">
    <property type="term" value="C:nuclear replication fork"/>
    <property type="evidence" value="ECO:0000318"/>
    <property type="project" value="GO_Central"/>
</dbReference>
<dbReference type="GO" id="GO:0005634">
    <property type="term" value="C:nucleus"/>
    <property type="evidence" value="ECO:0000250"/>
    <property type="project" value="UniProtKB"/>
</dbReference>
<dbReference type="GO" id="GO:0005524">
    <property type="term" value="F:ATP binding"/>
    <property type="evidence" value="ECO:0007669"/>
    <property type="project" value="UniProtKB-KW"/>
</dbReference>
<dbReference type="GO" id="GO:0036310">
    <property type="term" value="F:ATP-dependent DNA/DNA annealing activity"/>
    <property type="evidence" value="ECO:0000250"/>
    <property type="project" value="UniProtKB"/>
</dbReference>
<dbReference type="GO" id="GO:0004386">
    <property type="term" value="F:helicase activity"/>
    <property type="evidence" value="ECO:0007669"/>
    <property type="project" value="UniProtKB-KW"/>
</dbReference>
<dbReference type="GO" id="GO:0016787">
    <property type="term" value="F:hydrolase activity"/>
    <property type="evidence" value="ECO:0007669"/>
    <property type="project" value="UniProtKB-KW"/>
</dbReference>
<dbReference type="GO" id="GO:0006281">
    <property type="term" value="P:DNA repair"/>
    <property type="evidence" value="ECO:0000318"/>
    <property type="project" value="GO_Central"/>
</dbReference>
<dbReference type="GO" id="GO:0006357">
    <property type="term" value="P:regulation of transcription by RNA polymerase II"/>
    <property type="evidence" value="ECO:0000250"/>
    <property type="project" value="UniProtKB"/>
</dbReference>
<dbReference type="GO" id="GO:0031297">
    <property type="term" value="P:replication fork processing"/>
    <property type="evidence" value="ECO:0000318"/>
    <property type="project" value="GO_Central"/>
</dbReference>
<dbReference type="CDD" id="cd18010">
    <property type="entry name" value="DEXHc_HARP_SMARCAL1"/>
    <property type="match status" value="1"/>
</dbReference>
<dbReference type="CDD" id="cd18793">
    <property type="entry name" value="SF2_C_SNF"/>
    <property type="match status" value="1"/>
</dbReference>
<dbReference type="FunFam" id="3.40.50.300:FF:001036">
    <property type="entry name" value="SWI/SNF related, matrix associated, actin dependent regulator of chromatin, subfamily a like 1"/>
    <property type="match status" value="1"/>
</dbReference>
<dbReference type="FunFam" id="3.40.50.10810:FF:000026">
    <property type="entry name" value="SWI/SNF related, matrix associated, actin dependent regulator of chromatin, subfamily a-like 1"/>
    <property type="match status" value="1"/>
</dbReference>
<dbReference type="Gene3D" id="3.40.50.300">
    <property type="entry name" value="P-loop containing nucleotide triphosphate hydrolases"/>
    <property type="match status" value="1"/>
</dbReference>
<dbReference type="Gene3D" id="3.40.50.10810">
    <property type="entry name" value="Tandem AAA-ATPase domain"/>
    <property type="match status" value="1"/>
</dbReference>
<dbReference type="InterPro" id="IPR010003">
    <property type="entry name" value="HARP_dom"/>
</dbReference>
<dbReference type="InterPro" id="IPR014001">
    <property type="entry name" value="Helicase_ATP-bd"/>
</dbReference>
<dbReference type="InterPro" id="IPR001650">
    <property type="entry name" value="Helicase_C-like"/>
</dbReference>
<dbReference type="InterPro" id="IPR027417">
    <property type="entry name" value="P-loop_NTPase"/>
</dbReference>
<dbReference type="InterPro" id="IPR038718">
    <property type="entry name" value="SNF2-like_sf"/>
</dbReference>
<dbReference type="InterPro" id="IPR049730">
    <property type="entry name" value="SNF2/RAD54-like_C"/>
</dbReference>
<dbReference type="InterPro" id="IPR000330">
    <property type="entry name" value="SNF2_N"/>
</dbReference>
<dbReference type="PANTHER" id="PTHR45766">
    <property type="entry name" value="DNA ANNEALING HELICASE AND ENDONUCLEASE ZRANB3 FAMILY MEMBER"/>
    <property type="match status" value="1"/>
</dbReference>
<dbReference type="PANTHER" id="PTHR45766:SF6">
    <property type="entry name" value="SWI_SNF-RELATED MATRIX-ASSOCIATED ACTIN-DEPENDENT REGULATOR OF CHROMATIN SUBFAMILY A-LIKE PROTEIN 1"/>
    <property type="match status" value="1"/>
</dbReference>
<dbReference type="Pfam" id="PF07443">
    <property type="entry name" value="HARP"/>
    <property type="match status" value="2"/>
</dbReference>
<dbReference type="Pfam" id="PF00271">
    <property type="entry name" value="Helicase_C"/>
    <property type="match status" value="1"/>
</dbReference>
<dbReference type="Pfam" id="PF00176">
    <property type="entry name" value="SNF2-rel_dom"/>
    <property type="match status" value="1"/>
</dbReference>
<dbReference type="SMART" id="SM00487">
    <property type="entry name" value="DEXDc"/>
    <property type="match status" value="1"/>
</dbReference>
<dbReference type="SMART" id="SM00490">
    <property type="entry name" value="HELICc"/>
    <property type="match status" value="1"/>
</dbReference>
<dbReference type="SUPFAM" id="SSF52540">
    <property type="entry name" value="P-loop containing nucleoside triphosphate hydrolases"/>
    <property type="match status" value="2"/>
</dbReference>
<dbReference type="PROSITE" id="PS51467">
    <property type="entry name" value="HARP"/>
    <property type="match status" value="2"/>
</dbReference>
<dbReference type="PROSITE" id="PS51192">
    <property type="entry name" value="HELICASE_ATP_BIND_1"/>
    <property type="match status" value="1"/>
</dbReference>
<dbReference type="PROSITE" id="PS51194">
    <property type="entry name" value="HELICASE_CTER"/>
    <property type="match status" value="1"/>
</dbReference>
<sequence>MSVCLTEEQKRKIEENRQRALARRAERLAAQQNTLKQTNNSHSTLFNIQKSTVEQGALFSGQRTNVTAACMAPLQQGSNNKYAFQKTSSGGSAASSLPGTAENKPQAGGNGPCDYKVPADPAQDFTSSKNLTGKYVAPKAHCVSSVPSFNDTPNPRQLNPACTTQEQEKPKNSSYSYSRPDSDTACDKFTAGPGPGPIRNTTAISKFYGANPGIKPALPVSNKTVSEVRDRGVTGSSVEAVPVKKASSSTRGRCVKHMEGRFRVEVGYSAELIALFKTIPSKAYDPATKMWNFGLEDYASLMSEVQRVQSVELKALEGMEGVQIAPPPTSGSGTNINALLAMCNNWQRPNATLRGRCILISRSRFEMEIGYHTEIIGLFKQMNTRNYDTKTRKWSFMLEDYQKLMESVRNIQQVEVEPLPRPVLQAFAPQFEKTTISLAEIEDVDLSHVDSKLIGNLMPFQRDGVNFAISREGRLLLADDMGLGKTIQAICIAAYYRKEWPLLVVAPSSVRFTWAEAFHRWLPSLNPESVNVIVTGRDSQSANLINIISFDLLGKMDKQIAANFKVIIIDESHFLKNVKTARCKAAMPLLKSAKRVMLLSGTPAMSRPAELYTQIAAVRPTFFPRFHDFGIRYCDAKQMPWGWDYSGSSNLNELKLLLEESIMIRRLKSEVLSQLPAKQRKMVVVAPEGITAKTKAALAAAAKEMAKGFKSKVQEKEALLLFYNRTAEAKIRSVLEYIIDLLESGREKFLVFAHHKLVLDNICEELGKKEVPYIRIDGNTSSADRQSLCHKFQFSEKSCVAVLSITAANMGLTLSSADLVVFAELFWNPGVLIQAEDRVHRIGQTSSVNIHYLVAKGTADDYLWPMIQEKIKVLGQAGLSEANFSETTESTDYFYKDPKQKTIYDLFQRSFSEQGAENDSDEALLLEACEEVDLGESTCGPTDYSGNACKRRKIDDYFAL</sequence>
<keyword id="KW-0175">Coiled coil</keyword>
<keyword id="KW-0378">Hydrolase</keyword>
<keyword id="KW-0539">Nucleus</keyword>
<keyword id="KW-1185">Reference proteome</keyword>
<keyword id="KW-0677">Repeat</keyword>
<evidence type="ECO:0000250" key="1">
    <source>
        <dbReference type="UniProtKB" id="Q9NZC9"/>
    </source>
</evidence>
<evidence type="ECO:0000255" key="2"/>
<evidence type="ECO:0000255" key="3">
    <source>
        <dbReference type="PROSITE-ProRule" id="PRU00541"/>
    </source>
</evidence>
<evidence type="ECO:0000255" key="4">
    <source>
        <dbReference type="PROSITE-ProRule" id="PRU00542"/>
    </source>
</evidence>
<evidence type="ECO:0000255" key="5">
    <source>
        <dbReference type="PROSITE-ProRule" id="PRU00800"/>
    </source>
</evidence>
<evidence type="ECO:0000256" key="6">
    <source>
        <dbReference type="SAM" id="MobiDB-lite"/>
    </source>
</evidence>
<gene>
    <name type="primary">smarcal1</name>
    <name type="synonym">harp</name>
</gene>
<reference key="1">
    <citation type="submission" date="2005-08" db="EMBL/GenBank/DDBJ databases">
        <authorList>
            <consortium name="NIH - Xenopus Gene Collection (XGC) project"/>
        </authorList>
    </citation>
    <scope>NUCLEOTIDE SEQUENCE [LARGE SCALE MRNA]</scope>
    <source>
        <tissue>Egg</tissue>
    </source>
</reference>
<comment type="function">
    <text evidence="1">ATP-dependent annealing helicase that catalyzes the rewinding of the stably unwound DNA. Rewinds single-stranded DNA bubbles that are stably bound by replication protein A (RPA). Acts throughout the genome to reanneal stably unwound DNA, performing the opposite reaction of many enzymes, such as helicases and polymerases, that unwind DNA (By similarity).</text>
</comment>
<comment type="catalytic activity">
    <reaction evidence="1">
        <text>ATP + H2O = ADP + phosphate + H(+)</text>
        <dbReference type="Rhea" id="RHEA:13065"/>
        <dbReference type="ChEBI" id="CHEBI:15377"/>
        <dbReference type="ChEBI" id="CHEBI:15378"/>
        <dbReference type="ChEBI" id="CHEBI:30616"/>
        <dbReference type="ChEBI" id="CHEBI:43474"/>
        <dbReference type="ChEBI" id="CHEBI:456216"/>
    </reaction>
    <physiologicalReaction direction="left-to-right" evidence="1">
        <dbReference type="Rhea" id="RHEA:13066"/>
    </physiologicalReaction>
</comment>
<comment type="subcellular location">
    <subcellularLocation>
        <location evidence="1">Nucleus</location>
    </subcellularLocation>
</comment>
<comment type="similarity">
    <text evidence="5">Belongs to the SNF2/RAD54 helicase family. SMARCAL1 subfamily.</text>
</comment>